<reference key="1">
    <citation type="submission" date="2007-06" db="EMBL/GenBank/DDBJ databases">
        <title>Complete sequence of chromosome of Staphylococcus aureus subsp. aureus JH1.</title>
        <authorList>
            <consortium name="US DOE Joint Genome Institute"/>
            <person name="Copeland A."/>
            <person name="Lucas S."/>
            <person name="Lapidus A."/>
            <person name="Barry K."/>
            <person name="Detter J.C."/>
            <person name="Glavina del Rio T."/>
            <person name="Hammon N."/>
            <person name="Israni S."/>
            <person name="Dalin E."/>
            <person name="Tice H."/>
            <person name="Pitluck S."/>
            <person name="Chain P."/>
            <person name="Malfatti S."/>
            <person name="Shin M."/>
            <person name="Vergez L."/>
            <person name="Schmutz J."/>
            <person name="Larimer F."/>
            <person name="Land M."/>
            <person name="Hauser L."/>
            <person name="Kyrpides N."/>
            <person name="Ivanova N."/>
            <person name="Tomasz A."/>
            <person name="Richardson P."/>
        </authorList>
    </citation>
    <scope>NUCLEOTIDE SEQUENCE [LARGE SCALE GENOMIC DNA]</scope>
    <source>
        <strain>JH1</strain>
    </source>
</reference>
<proteinExistence type="inferred from homology"/>
<gene>
    <name evidence="1" type="primary">aroK</name>
    <name type="ordered locus">SaurJH1_1629</name>
</gene>
<accession>A6U209</accession>
<dbReference type="EC" id="2.7.1.71" evidence="1"/>
<dbReference type="EMBL" id="CP000736">
    <property type="protein sequence ID" value="ABR52477.1"/>
    <property type="molecule type" value="Genomic_DNA"/>
</dbReference>
<dbReference type="SMR" id="A6U209"/>
<dbReference type="KEGG" id="sah:SaurJH1_1629"/>
<dbReference type="HOGENOM" id="CLU_057607_4_3_9"/>
<dbReference type="UniPathway" id="UPA00053">
    <property type="reaction ID" value="UER00088"/>
</dbReference>
<dbReference type="GO" id="GO:0005829">
    <property type="term" value="C:cytosol"/>
    <property type="evidence" value="ECO:0007669"/>
    <property type="project" value="TreeGrafter"/>
</dbReference>
<dbReference type="GO" id="GO:0005524">
    <property type="term" value="F:ATP binding"/>
    <property type="evidence" value="ECO:0007669"/>
    <property type="project" value="UniProtKB-UniRule"/>
</dbReference>
<dbReference type="GO" id="GO:0000287">
    <property type="term" value="F:magnesium ion binding"/>
    <property type="evidence" value="ECO:0007669"/>
    <property type="project" value="UniProtKB-UniRule"/>
</dbReference>
<dbReference type="GO" id="GO:0004765">
    <property type="term" value="F:shikimate kinase activity"/>
    <property type="evidence" value="ECO:0007669"/>
    <property type="project" value="UniProtKB-UniRule"/>
</dbReference>
<dbReference type="GO" id="GO:0008652">
    <property type="term" value="P:amino acid biosynthetic process"/>
    <property type="evidence" value="ECO:0007669"/>
    <property type="project" value="UniProtKB-KW"/>
</dbReference>
<dbReference type="GO" id="GO:0009073">
    <property type="term" value="P:aromatic amino acid family biosynthetic process"/>
    <property type="evidence" value="ECO:0007669"/>
    <property type="project" value="UniProtKB-KW"/>
</dbReference>
<dbReference type="GO" id="GO:0009423">
    <property type="term" value="P:chorismate biosynthetic process"/>
    <property type="evidence" value="ECO:0007669"/>
    <property type="project" value="UniProtKB-UniRule"/>
</dbReference>
<dbReference type="CDD" id="cd00464">
    <property type="entry name" value="SK"/>
    <property type="match status" value="1"/>
</dbReference>
<dbReference type="FunFam" id="3.40.50.300:FF:001734">
    <property type="entry name" value="Shikimate kinase"/>
    <property type="match status" value="1"/>
</dbReference>
<dbReference type="Gene3D" id="3.40.50.300">
    <property type="entry name" value="P-loop containing nucleotide triphosphate hydrolases"/>
    <property type="match status" value="1"/>
</dbReference>
<dbReference type="HAMAP" id="MF_00109">
    <property type="entry name" value="Shikimate_kinase"/>
    <property type="match status" value="1"/>
</dbReference>
<dbReference type="InterPro" id="IPR027417">
    <property type="entry name" value="P-loop_NTPase"/>
</dbReference>
<dbReference type="InterPro" id="IPR031322">
    <property type="entry name" value="Shikimate/glucono_kinase"/>
</dbReference>
<dbReference type="InterPro" id="IPR000623">
    <property type="entry name" value="Shikimate_kinase/TSH1"/>
</dbReference>
<dbReference type="InterPro" id="IPR023000">
    <property type="entry name" value="Shikimate_kinase_CS"/>
</dbReference>
<dbReference type="PANTHER" id="PTHR21087">
    <property type="entry name" value="SHIKIMATE KINASE"/>
    <property type="match status" value="1"/>
</dbReference>
<dbReference type="PANTHER" id="PTHR21087:SF16">
    <property type="entry name" value="SHIKIMATE KINASE 1, CHLOROPLASTIC"/>
    <property type="match status" value="1"/>
</dbReference>
<dbReference type="Pfam" id="PF01202">
    <property type="entry name" value="SKI"/>
    <property type="match status" value="1"/>
</dbReference>
<dbReference type="PRINTS" id="PR01100">
    <property type="entry name" value="SHIKIMTKNASE"/>
</dbReference>
<dbReference type="SUPFAM" id="SSF52540">
    <property type="entry name" value="P-loop containing nucleoside triphosphate hydrolases"/>
    <property type="match status" value="1"/>
</dbReference>
<dbReference type="PROSITE" id="PS01128">
    <property type="entry name" value="SHIKIMATE_KINASE"/>
    <property type="match status" value="1"/>
</dbReference>
<protein>
    <recommendedName>
        <fullName evidence="1">Shikimate kinase</fullName>
        <shortName evidence="1">SK</shortName>
        <ecNumber evidence="1">2.7.1.71</ecNumber>
    </recommendedName>
</protein>
<name>AROK_STAA2</name>
<feature type="chain" id="PRO_1000075960" description="Shikimate kinase">
    <location>
        <begin position="1"/>
        <end position="174"/>
    </location>
</feature>
<feature type="binding site" evidence="1">
    <location>
        <begin position="15"/>
        <end position="20"/>
    </location>
    <ligand>
        <name>ATP</name>
        <dbReference type="ChEBI" id="CHEBI:30616"/>
    </ligand>
</feature>
<feature type="binding site" evidence="1">
    <location>
        <position position="19"/>
    </location>
    <ligand>
        <name>Mg(2+)</name>
        <dbReference type="ChEBI" id="CHEBI:18420"/>
    </ligand>
</feature>
<feature type="binding site" evidence="1">
    <location>
        <position position="37"/>
    </location>
    <ligand>
        <name>substrate</name>
    </ligand>
</feature>
<feature type="binding site" evidence="1">
    <location>
        <position position="61"/>
    </location>
    <ligand>
        <name>substrate</name>
    </ligand>
</feature>
<feature type="binding site" evidence="1">
    <location>
        <position position="82"/>
    </location>
    <ligand>
        <name>substrate</name>
    </ligand>
</feature>
<feature type="binding site" evidence="1">
    <location>
        <position position="120"/>
    </location>
    <ligand>
        <name>ATP</name>
        <dbReference type="ChEBI" id="CHEBI:30616"/>
    </ligand>
</feature>
<feature type="binding site" evidence="1">
    <location>
        <position position="138"/>
    </location>
    <ligand>
        <name>substrate</name>
    </ligand>
</feature>
<comment type="function">
    <text evidence="1">Catalyzes the specific phosphorylation of the 3-hydroxyl group of shikimic acid using ATP as a cosubstrate.</text>
</comment>
<comment type="catalytic activity">
    <reaction evidence="1">
        <text>shikimate + ATP = 3-phosphoshikimate + ADP + H(+)</text>
        <dbReference type="Rhea" id="RHEA:13121"/>
        <dbReference type="ChEBI" id="CHEBI:15378"/>
        <dbReference type="ChEBI" id="CHEBI:30616"/>
        <dbReference type="ChEBI" id="CHEBI:36208"/>
        <dbReference type="ChEBI" id="CHEBI:145989"/>
        <dbReference type="ChEBI" id="CHEBI:456216"/>
        <dbReference type="EC" id="2.7.1.71"/>
    </reaction>
</comment>
<comment type="cofactor">
    <cofactor evidence="1">
        <name>Mg(2+)</name>
        <dbReference type="ChEBI" id="CHEBI:18420"/>
    </cofactor>
    <text evidence="1">Binds 1 Mg(2+) ion per subunit.</text>
</comment>
<comment type="pathway">
    <text evidence="1">Metabolic intermediate biosynthesis; chorismate biosynthesis; chorismate from D-erythrose 4-phosphate and phosphoenolpyruvate: step 5/7.</text>
</comment>
<comment type="subunit">
    <text evidence="1">Monomer.</text>
</comment>
<comment type="subcellular location">
    <subcellularLocation>
        <location evidence="1">Cytoplasm</location>
    </subcellularLocation>
</comment>
<comment type="similarity">
    <text evidence="1">Belongs to the shikimate kinase family.</text>
</comment>
<evidence type="ECO:0000255" key="1">
    <source>
        <dbReference type="HAMAP-Rule" id="MF_00109"/>
    </source>
</evidence>
<organism>
    <name type="scientific">Staphylococcus aureus (strain JH1)</name>
    <dbReference type="NCBI Taxonomy" id="359787"/>
    <lineage>
        <taxon>Bacteria</taxon>
        <taxon>Bacillati</taxon>
        <taxon>Bacillota</taxon>
        <taxon>Bacilli</taxon>
        <taxon>Bacillales</taxon>
        <taxon>Staphylococcaceae</taxon>
        <taxon>Staphylococcus</taxon>
    </lineage>
</organism>
<sequence length="174" mass="20205">MNHDKSPIILIGFMGTGKSTIGKYVADEQNLSFIDIDSYIEEKYKLTIPEIFSKHGEQYFRNLEFTCLQECINTADIIATGGGIIESEEAFNFLKNQKNIIWLDCNIDIIYSRINDDPHRPNANNKTIKQLNDLYCSRILRYNEIAFKKFDSHLLSISEIYYELLNLIKASDQY</sequence>
<keyword id="KW-0028">Amino-acid biosynthesis</keyword>
<keyword id="KW-0057">Aromatic amino acid biosynthesis</keyword>
<keyword id="KW-0067">ATP-binding</keyword>
<keyword id="KW-0963">Cytoplasm</keyword>
<keyword id="KW-0418">Kinase</keyword>
<keyword id="KW-0460">Magnesium</keyword>
<keyword id="KW-0479">Metal-binding</keyword>
<keyword id="KW-0547">Nucleotide-binding</keyword>
<keyword id="KW-0808">Transferase</keyword>